<keyword id="KW-0414">Isoprene biosynthesis</keyword>
<keyword id="KW-0460">Magnesium</keyword>
<keyword id="KW-0479">Metal-binding</keyword>
<keyword id="KW-0784">Thiamine biosynthesis</keyword>
<keyword id="KW-0786">Thiamine pyrophosphate</keyword>
<keyword id="KW-0808">Transferase</keyword>
<evidence type="ECO:0000255" key="1">
    <source>
        <dbReference type="HAMAP-Rule" id="MF_00315"/>
    </source>
</evidence>
<organism>
    <name type="scientific">Campylobacter fetus subsp. fetus (strain 82-40)</name>
    <dbReference type="NCBI Taxonomy" id="360106"/>
    <lineage>
        <taxon>Bacteria</taxon>
        <taxon>Pseudomonadati</taxon>
        <taxon>Campylobacterota</taxon>
        <taxon>Epsilonproteobacteria</taxon>
        <taxon>Campylobacterales</taxon>
        <taxon>Campylobacteraceae</taxon>
        <taxon>Campylobacter</taxon>
    </lineage>
</organism>
<gene>
    <name evidence="1" type="primary">dxs</name>
    <name type="ordered locus">CFF8240_0264</name>
</gene>
<reference key="1">
    <citation type="submission" date="2006-11" db="EMBL/GenBank/DDBJ databases">
        <title>Sequence of Campylobacter fetus subsp. fetus 82-40.</title>
        <authorList>
            <person name="Fouts D.E."/>
            <person name="Nelson K.E."/>
        </authorList>
    </citation>
    <scope>NUCLEOTIDE SEQUENCE [LARGE SCALE GENOMIC DNA]</scope>
    <source>
        <strain>82-40</strain>
    </source>
</reference>
<dbReference type="EC" id="2.2.1.7" evidence="1"/>
<dbReference type="EMBL" id="CP000487">
    <property type="protein sequence ID" value="ABK83159.1"/>
    <property type="molecule type" value="Genomic_DNA"/>
</dbReference>
<dbReference type="RefSeq" id="WP_002848344.1">
    <property type="nucleotide sequence ID" value="NC_008599.1"/>
</dbReference>
<dbReference type="SMR" id="A0RMN5"/>
<dbReference type="GeneID" id="61064108"/>
<dbReference type="KEGG" id="cff:CFF8240_0264"/>
<dbReference type="eggNOG" id="COG1154">
    <property type="taxonomic scope" value="Bacteria"/>
</dbReference>
<dbReference type="HOGENOM" id="CLU_009227_1_4_7"/>
<dbReference type="UniPathway" id="UPA00064">
    <property type="reaction ID" value="UER00091"/>
</dbReference>
<dbReference type="Proteomes" id="UP000000760">
    <property type="component" value="Chromosome"/>
</dbReference>
<dbReference type="GO" id="GO:0005829">
    <property type="term" value="C:cytosol"/>
    <property type="evidence" value="ECO:0007669"/>
    <property type="project" value="TreeGrafter"/>
</dbReference>
<dbReference type="GO" id="GO:0008661">
    <property type="term" value="F:1-deoxy-D-xylulose-5-phosphate synthase activity"/>
    <property type="evidence" value="ECO:0007669"/>
    <property type="project" value="UniProtKB-UniRule"/>
</dbReference>
<dbReference type="GO" id="GO:0000287">
    <property type="term" value="F:magnesium ion binding"/>
    <property type="evidence" value="ECO:0007669"/>
    <property type="project" value="UniProtKB-UniRule"/>
</dbReference>
<dbReference type="GO" id="GO:0030976">
    <property type="term" value="F:thiamine pyrophosphate binding"/>
    <property type="evidence" value="ECO:0007669"/>
    <property type="project" value="UniProtKB-UniRule"/>
</dbReference>
<dbReference type="GO" id="GO:0052865">
    <property type="term" value="P:1-deoxy-D-xylulose 5-phosphate biosynthetic process"/>
    <property type="evidence" value="ECO:0007669"/>
    <property type="project" value="UniProtKB-UniPathway"/>
</dbReference>
<dbReference type="GO" id="GO:0019288">
    <property type="term" value="P:isopentenyl diphosphate biosynthetic process, methylerythritol 4-phosphate pathway"/>
    <property type="evidence" value="ECO:0007669"/>
    <property type="project" value="TreeGrafter"/>
</dbReference>
<dbReference type="GO" id="GO:0016114">
    <property type="term" value="P:terpenoid biosynthetic process"/>
    <property type="evidence" value="ECO:0007669"/>
    <property type="project" value="UniProtKB-UniRule"/>
</dbReference>
<dbReference type="GO" id="GO:0009228">
    <property type="term" value="P:thiamine biosynthetic process"/>
    <property type="evidence" value="ECO:0007669"/>
    <property type="project" value="UniProtKB-UniRule"/>
</dbReference>
<dbReference type="CDD" id="cd02007">
    <property type="entry name" value="TPP_DXS"/>
    <property type="match status" value="1"/>
</dbReference>
<dbReference type="CDD" id="cd07033">
    <property type="entry name" value="TPP_PYR_DXS_TK_like"/>
    <property type="match status" value="1"/>
</dbReference>
<dbReference type="FunFam" id="3.40.50.970:FF:000005">
    <property type="entry name" value="1-deoxy-D-xylulose-5-phosphate synthase"/>
    <property type="match status" value="1"/>
</dbReference>
<dbReference type="Gene3D" id="3.40.50.920">
    <property type="match status" value="1"/>
</dbReference>
<dbReference type="Gene3D" id="3.40.50.970">
    <property type="match status" value="2"/>
</dbReference>
<dbReference type="HAMAP" id="MF_00315">
    <property type="entry name" value="DXP_synth"/>
    <property type="match status" value="1"/>
</dbReference>
<dbReference type="InterPro" id="IPR005477">
    <property type="entry name" value="Dxylulose-5-P_synthase"/>
</dbReference>
<dbReference type="InterPro" id="IPR029061">
    <property type="entry name" value="THDP-binding"/>
</dbReference>
<dbReference type="InterPro" id="IPR009014">
    <property type="entry name" value="Transketo_C/PFOR_II"/>
</dbReference>
<dbReference type="InterPro" id="IPR005475">
    <property type="entry name" value="Transketolase-like_Pyr-bd"/>
</dbReference>
<dbReference type="InterPro" id="IPR020826">
    <property type="entry name" value="Transketolase_BS"/>
</dbReference>
<dbReference type="InterPro" id="IPR033248">
    <property type="entry name" value="Transketolase_C"/>
</dbReference>
<dbReference type="InterPro" id="IPR049557">
    <property type="entry name" value="Transketolase_CS"/>
</dbReference>
<dbReference type="NCBIfam" id="TIGR00204">
    <property type="entry name" value="dxs"/>
    <property type="match status" value="1"/>
</dbReference>
<dbReference type="NCBIfam" id="NF003933">
    <property type="entry name" value="PRK05444.2-2"/>
    <property type="match status" value="1"/>
</dbReference>
<dbReference type="PANTHER" id="PTHR43322">
    <property type="entry name" value="1-D-DEOXYXYLULOSE 5-PHOSPHATE SYNTHASE-RELATED"/>
    <property type="match status" value="1"/>
</dbReference>
<dbReference type="PANTHER" id="PTHR43322:SF5">
    <property type="entry name" value="1-DEOXY-D-XYLULOSE-5-PHOSPHATE SYNTHASE, CHLOROPLASTIC"/>
    <property type="match status" value="1"/>
</dbReference>
<dbReference type="Pfam" id="PF13292">
    <property type="entry name" value="DXP_synthase_N"/>
    <property type="match status" value="1"/>
</dbReference>
<dbReference type="Pfam" id="PF02779">
    <property type="entry name" value="Transket_pyr"/>
    <property type="match status" value="1"/>
</dbReference>
<dbReference type="Pfam" id="PF02780">
    <property type="entry name" value="Transketolase_C"/>
    <property type="match status" value="1"/>
</dbReference>
<dbReference type="SMART" id="SM00861">
    <property type="entry name" value="Transket_pyr"/>
    <property type="match status" value="1"/>
</dbReference>
<dbReference type="SUPFAM" id="SSF52518">
    <property type="entry name" value="Thiamin diphosphate-binding fold (THDP-binding)"/>
    <property type="match status" value="1"/>
</dbReference>
<dbReference type="SUPFAM" id="SSF52922">
    <property type="entry name" value="TK C-terminal domain-like"/>
    <property type="match status" value="1"/>
</dbReference>
<dbReference type="PROSITE" id="PS00801">
    <property type="entry name" value="TRANSKETOLASE_1"/>
    <property type="match status" value="1"/>
</dbReference>
<dbReference type="PROSITE" id="PS00802">
    <property type="entry name" value="TRANSKETOLASE_2"/>
    <property type="match status" value="1"/>
</dbReference>
<comment type="function">
    <text evidence="1">Catalyzes the acyloin condensation reaction between C atoms 2 and 3 of pyruvate and glyceraldehyde 3-phosphate to yield 1-deoxy-D-xylulose-5-phosphate (DXP).</text>
</comment>
<comment type="catalytic activity">
    <reaction evidence="1">
        <text>D-glyceraldehyde 3-phosphate + pyruvate + H(+) = 1-deoxy-D-xylulose 5-phosphate + CO2</text>
        <dbReference type="Rhea" id="RHEA:12605"/>
        <dbReference type="ChEBI" id="CHEBI:15361"/>
        <dbReference type="ChEBI" id="CHEBI:15378"/>
        <dbReference type="ChEBI" id="CHEBI:16526"/>
        <dbReference type="ChEBI" id="CHEBI:57792"/>
        <dbReference type="ChEBI" id="CHEBI:59776"/>
        <dbReference type="EC" id="2.2.1.7"/>
    </reaction>
</comment>
<comment type="cofactor">
    <cofactor evidence="1">
        <name>Mg(2+)</name>
        <dbReference type="ChEBI" id="CHEBI:18420"/>
    </cofactor>
    <text evidence="1">Binds 1 Mg(2+) ion per subunit.</text>
</comment>
<comment type="cofactor">
    <cofactor evidence="1">
        <name>thiamine diphosphate</name>
        <dbReference type="ChEBI" id="CHEBI:58937"/>
    </cofactor>
    <text evidence="1">Binds 1 thiamine pyrophosphate per subunit.</text>
</comment>
<comment type="pathway">
    <text evidence="1">Metabolic intermediate biosynthesis; 1-deoxy-D-xylulose 5-phosphate biosynthesis; 1-deoxy-D-xylulose 5-phosphate from D-glyceraldehyde 3-phosphate and pyruvate: step 1/1.</text>
</comment>
<comment type="subunit">
    <text evidence="1">Homodimer.</text>
</comment>
<comment type="similarity">
    <text evidence="1">Belongs to the transketolase family. DXPS subfamily.</text>
</comment>
<name>DXS_CAMFF</name>
<accession>A0RMN5</accession>
<protein>
    <recommendedName>
        <fullName evidence="1">1-deoxy-D-xylulose-5-phosphate synthase</fullName>
        <ecNumber evidence="1">2.2.1.7</ecNumber>
    </recommendedName>
    <alternativeName>
        <fullName evidence="1">1-deoxyxylulose-5-phosphate synthase</fullName>
        <shortName evidence="1">DXP synthase</shortName>
        <shortName evidence="1">DXPS</shortName>
    </alternativeName>
</protein>
<proteinExistence type="inferred from homology"/>
<sequence length="600" mass="66611">MDIKSKSLEELTDLCDTLRDKILKTVSSNGGHLSSNMGAVELSVAMHYVFDVSKDPFIFDVSHQSYAHKLLTDRWNRFDSLRQFNGISGYTKPSESKFDYFVAGHSSTSISLVVGACKAIKLKGENRLPVAVIGDGAMSAGMAYEALNELGDRKYPCVIILNDNEMSISKPIGALSKYLSQMMAGQFYQKFKARVNQFLSYVPDSAAYMAKRFEEGFRLITPGMFFEELGLEYIGPVDGHDLKELISTFTTAKLMNKPVIVHIQTIKGKGYELAEGPKEKWHGVSPFNLKNGQSVNQANQKSATNIFSELLLNLAKKYENVVGVTAAMPSGTGLNKIIEVFPDRFWDVAIAEQHAVTSMAAMAKEGFKPYIAIYSTFMQRAYDQVIHDCAIMRLPVVFCMDRAGIVGEDGETHQGAFDISFLNAIPNLNLVAPRDEESFKNIMEFSYAFDSPLAIRYPRGNFILNNEYKSQKTALAKGEILENGDGSVAFIGYGNGVGKAVQTAKKLNFKPTIVDLVFAKPLDKELLLQIAKTHNKWYVFSDSAKRGGIGEILAGFLQENLLTNILIKSFEYEDTFIKHGKTSVVEDYLSISAEKISNTF</sequence>
<feature type="chain" id="PRO_1000019014" description="1-deoxy-D-xylulose-5-phosphate synthase">
    <location>
        <begin position="1"/>
        <end position="600"/>
    </location>
</feature>
<feature type="binding site" evidence="1">
    <location>
        <position position="63"/>
    </location>
    <ligand>
        <name>thiamine diphosphate</name>
        <dbReference type="ChEBI" id="CHEBI:58937"/>
    </ligand>
</feature>
<feature type="binding site" evidence="1">
    <location>
        <begin position="104"/>
        <end position="106"/>
    </location>
    <ligand>
        <name>thiamine diphosphate</name>
        <dbReference type="ChEBI" id="CHEBI:58937"/>
    </ligand>
</feature>
<feature type="binding site" evidence="1">
    <location>
        <position position="135"/>
    </location>
    <ligand>
        <name>Mg(2+)</name>
        <dbReference type="ChEBI" id="CHEBI:18420"/>
    </ligand>
</feature>
<feature type="binding site" evidence="1">
    <location>
        <begin position="136"/>
        <end position="137"/>
    </location>
    <ligand>
        <name>thiamine diphosphate</name>
        <dbReference type="ChEBI" id="CHEBI:58937"/>
    </ligand>
</feature>
<feature type="binding site" evidence="1">
    <location>
        <position position="164"/>
    </location>
    <ligand>
        <name>Mg(2+)</name>
        <dbReference type="ChEBI" id="CHEBI:18420"/>
    </ligand>
</feature>
<feature type="binding site" evidence="1">
    <location>
        <position position="164"/>
    </location>
    <ligand>
        <name>thiamine diphosphate</name>
        <dbReference type="ChEBI" id="CHEBI:58937"/>
    </ligand>
</feature>
<feature type="binding site" evidence="1">
    <location>
        <position position="271"/>
    </location>
    <ligand>
        <name>thiamine diphosphate</name>
        <dbReference type="ChEBI" id="CHEBI:58937"/>
    </ligand>
</feature>
<feature type="binding site" evidence="1">
    <location>
        <position position="352"/>
    </location>
    <ligand>
        <name>thiamine diphosphate</name>
        <dbReference type="ChEBI" id="CHEBI:58937"/>
    </ligand>
</feature>